<organism>
    <name type="scientific">Ostreid herpesvirus 1 (isolate France)</name>
    <name type="common">OsHV-1</name>
    <name type="synonym">Pacific oyster herpesvirus</name>
    <dbReference type="NCBI Taxonomy" id="654903"/>
    <lineage>
        <taxon>Viruses</taxon>
        <taxon>Duplodnaviria</taxon>
        <taxon>Heunggongvirae</taxon>
        <taxon>Peploviricota</taxon>
        <taxon>Herviviricetes</taxon>
        <taxon>Herpesvirales</taxon>
        <taxon>Malacoherpesviridae</taxon>
        <taxon>Ostreavirus</taxon>
        <taxon>Ostreavirus ostreidmalaco1</taxon>
        <taxon>Ostreid herpesvirus 1</taxon>
    </lineage>
</organism>
<name>Y004_OSHVF</name>
<protein>
    <recommendedName>
        <fullName>Uncharacterized protein ORF4</fullName>
    </recommendedName>
</protein>
<sequence>MQPFTEFCTLTKAITSASNDFFINQTRLTCDICKELVSFDCEDKVVASLAAVRSDIPIEVTERKDLNLLDLIQFFEKKIEFTTLIDELFTAHKDHCQKNGKPCTMLSIIAGRYTDELYREESIEENRSWVLKAYKLDLINQQFFRNNRLYDILKEAGVENLERIMLEDEIESVCKTKAKSPEEVITKMIPEQLTKLLELMSCPQKQVTVYIRGSGYTPVNHAKLNACLKDRDIQLYLGMPMSYFRYSSWESYYEGNGMCLKSEHELKHNVAKVYAAVKKVAPKVKLLAWTLEANDEMRTCSCMVKQHDMAIAAIRGELYVPPELRPVPVRLGKRRASSGDVSDIPMKRN</sequence>
<dbReference type="EMBL" id="AY509253">
    <property type="protein sequence ID" value="AAS00897.1"/>
    <property type="molecule type" value="Genomic_DNA"/>
</dbReference>
<dbReference type="EMBL" id="AY509253">
    <property type="protein sequence ID" value="AAS01000.1"/>
    <property type="molecule type" value="Genomic_DNA"/>
</dbReference>
<dbReference type="RefSeq" id="YP_024550.1">
    <property type="nucleotide sequence ID" value="NC_005881.2"/>
</dbReference>
<dbReference type="RefSeq" id="YP_024653.1">
    <property type="nucleotide sequence ID" value="NC_005881.2"/>
</dbReference>
<dbReference type="SMR" id="Q6R7B5"/>
<dbReference type="KEGG" id="vg:2948144"/>
<dbReference type="KEGG" id="vg:2948206"/>
<dbReference type="Proteomes" id="UP000007021">
    <property type="component" value="Segment"/>
</dbReference>
<feature type="chain" id="PRO_0000385040" description="Uncharacterized protein ORF4">
    <location>
        <begin position="1"/>
        <end position="349"/>
    </location>
</feature>
<accession>Q6R7B5</accession>
<gene>
    <name type="ORF">ORF4</name>
</gene>
<keyword id="KW-1185">Reference proteome</keyword>
<proteinExistence type="predicted"/>
<reference key="1">
    <citation type="journal article" date="2005" name="J. Gen. Virol.">
        <title>A novel class of herpesvirus with bivalve hosts.</title>
        <authorList>
            <person name="Davison A.J."/>
            <person name="Trus B.L."/>
            <person name="Cheng N."/>
            <person name="Steven A.C."/>
            <person name="Watson M.S."/>
            <person name="Cunningham C."/>
            <person name="Le Deuff R.M."/>
            <person name="Renault T."/>
        </authorList>
    </citation>
    <scope>NUCLEOTIDE SEQUENCE [LARGE SCALE GENOMIC DNA]</scope>
</reference>
<organismHost>
    <name type="scientific">Magallana gigas</name>
    <name type="common">Pacific oyster</name>
    <name type="synonym">Crassostrea gigas</name>
    <dbReference type="NCBI Taxonomy" id="29159"/>
</organismHost>
<organismHost>
    <name type="scientific">Pecten maximus</name>
    <name type="common">King scallop</name>
    <name type="synonym">Pilgrim's clam</name>
    <dbReference type="NCBI Taxonomy" id="6579"/>
</organismHost>